<dbReference type="EC" id="2.3.1.234" evidence="1"/>
<dbReference type="EMBL" id="CP000959">
    <property type="protein sequence ID" value="ACA92798.1"/>
    <property type="molecule type" value="Genomic_DNA"/>
</dbReference>
<dbReference type="RefSeq" id="WP_011548147.1">
    <property type="nucleotide sequence ID" value="NC_010515.1"/>
</dbReference>
<dbReference type="SMR" id="B1K3S7"/>
<dbReference type="GeneID" id="83050423"/>
<dbReference type="KEGG" id="bcm:Bcenmc03_3646"/>
<dbReference type="HOGENOM" id="CLU_023208_0_2_4"/>
<dbReference type="Proteomes" id="UP000002169">
    <property type="component" value="Chromosome 2"/>
</dbReference>
<dbReference type="GO" id="GO:0005737">
    <property type="term" value="C:cytoplasm"/>
    <property type="evidence" value="ECO:0007669"/>
    <property type="project" value="UniProtKB-SubCell"/>
</dbReference>
<dbReference type="GO" id="GO:0005506">
    <property type="term" value="F:iron ion binding"/>
    <property type="evidence" value="ECO:0007669"/>
    <property type="project" value="UniProtKB-UniRule"/>
</dbReference>
<dbReference type="GO" id="GO:0061711">
    <property type="term" value="F:N(6)-L-threonylcarbamoyladenine synthase activity"/>
    <property type="evidence" value="ECO:0007669"/>
    <property type="project" value="UniProtKB-EC"/>
</dbReference>
<dbReference type="GO" id="GO:0002949">
    <property type="term" value="P:tRNA threonylcarbamoyladenosine modification"/>
    <property type="evidence" value="ECO:0007669"/>
    <property type="project" value="UniProtKB-UniRule"/>
</dbReference>
<dbReference type="CDD" id="cd24133">
    <property type="entry name" value="ASKHA_NBD_TsaD_bac"/>
    <property type="match status" value="1"/>
</dbReference>
<dbReference type="FunFam" id="3.30.420.40:FF:000012">
    <property type="entry name" value="tRNA N6-adenosine threonylcarbamoyltransferase"/>
    <property type="match status" value="1"/>
</dbReference>
<dbReference type="FunFam" id="3.30.420.40:FF:000040">
    <property type="entry name" value="tRNA N6-adenosine threonylcarbamoyltransferase"/>
    <property type="match status" value="1"/>
</dbReference>
<dbReference type="Gene3D" id="3.30.420.40">
    <property type="match status" value="2"/>
</dbReference>
<dbReference type="HAMAP" id="MF_01445">
    <property type="entry name" value="TsaD"/>
    <property type="match status" value="1"/>
</dbReference>
<dbReference type="InterPro" id="IPR043129">
    <property type="entry name" value="ATPase_NBD"/>
</dbReference>
<dbReference type="InterPro" id="IPR000905">
    <property type="entry name" value="Gcp-like_dom"/>
</dbReference>
<dbReference type="InterPro" id="IPR017861">
    <property type="entry name" value="KAE1/TsaD"/>
</dbReference>
<dbReference type="InterPro" id="IPR022450">
    <property type="entry name" value="TsaD"/>
</dbReference>
<dbReference type="NCBIfam" id="TIGR00329">
    <property type="entry name" value="gcp_kae1"/>
    <property type="match status" value="1"/>
</dbReference>
<dbReference type="NCBIfam" id="TIGR03723">
    <property type="entry name" value="T6A_TsaD_YgjD"/>
    <property type="match status" value="1"/>
</dbReference>
<dbReference type="PANTHER" id="PTHR11735">
    <property type="entry name" value="TRNA N6-ADENOSINE THREONYLCARBAMOYLTRANSFERASE"/>
    <property type="match status" value="1"/>
</dbReference>
<dbReference type="PANTHER" id="PTHR11735:SF6">
    <property type="entry name" value="TRNA N6-ADENOSINE THREONYLCARBAMOYLTRANSFERASE, MITOCHONDRIAL"/>
    <property type="match status" value="1"/>
</dbReference>
<dbReference type="Pfam" id="PF00814">
    <property type="entry name" value="TsaD"/>
    <property type="match status" value="1"/>
</dbReference>
<dbReference type="PRINTS" id="PR00789">
    <property type="entry name" value="OSIALOPTASE"/>
</dbReference>
<dbReference type="SUPFAM" id="SSF53067">
    <property type="entry name" value="Actin-like ATPase domain"/>
    <property type="match status" value="2"/>
</dbReference>
<organism>
    <name type="scientific">Burkholderia orbicola (strain MC0-3)</name>
    <dbReference type="NCBI Taxonomy" id="406425"/>
    <lineage>
        <taxon>Bacteria</taxon>
        <taxon>Pseudomonadati</taxon>
        <taxon>Pseudomonadota</taxon>
        <taxon>Betaproteobacteria</taxon>
        <taxon>Burkholderiales</taxon>
        <taxon>Burkholderiaceae</taxon>
        <taxon>Burkholderia</taxon>
        <taxon>Burkholderia cepacia complex</taxon>
        <taxon>Burkholderia orbicola</taxon>
    </lineage>
</organism>
<sequence length="346" mass="36402">MLVLGIESSCDETGLALYDTQRGLLAHALHSQIAMHRDYGGVVPELASRDHIRRALPLLEEVMAQSGTRRDDIDAIAFTQGPGLAGALLVGASIANALALAWNKPTVGIHHLEGHLLSPLLVDEPPPFPFVALLVSGGHTQLMRVTDVGVYETLGETLDDAAGEAFDKTAKLIGLGYPGGPEVSKLAETGTPGAVVLPRPMLHSGDLDFSFSGLKTAVLTQMKKFEAAKLDGEALERAKADLARGFVDAAVDVLVAKSLAALKKTKLKRLVVAGGVGANRQLRAALSAAAAKRGFDVHYPDLALCTDNGAMIALAGALRLGRWPEQANADYAFTVKPRWDLASLAG</sequence>
<feature type="chain" id="PRO_1000145955" description="tRNA N6-adenosine threonylcarbamoyltransferase">
    <location>
        <begin position="1"/>
        <end position="346"/>
    </location>
</feature>
<feature type="binding site" evidence="1">
    <location>
        <position position="111"/>
    </location>
    <ligand>
        <name>Fe cation</name>
        <dbReference type="ChEBI" id="CHEBI:24875"/>
    </ligand>
</feature>
<feature type="binding site" evidence="1">
    <location>
        <position position="115"/>
    </location>
    <ligand>
        <name>Fe cation</name>
        <dbReference type="ChEBI" id="CHEBI:24875"/>
    </ligand>
</feature>
<feature type="binding site" evidence="1">
    <location>
        <begin position="134"/>
        <end position="138"/>
    </location>
    <ligand>
        <name>substrate</name>
    </ligand>
</feature>
<feature type="binding site" evidence="1">
    <location>
        <position position="167"/>
    </location>
    <ligand>
        <name>substrate</name>
    </ligand>
</feature>
<feature type="binding site" evidence="1">
    <location>
        <position position="180"/>
    </location>
    <ligand>
        <name>substrate</name>
    </ligand>
</feature>
<feature type="binding site" evidence="1">
    <location>
        <position position="279"/>
    </location>
    <ligand>
        <name>substrate</name>
    </ligand>
</feature>
<feature type="binding site" evidence="1">
    <location>
        <position position="307"/>
    </location>
    <ligand>
        <name>Fe cation</name>
        <dbReference type="ChEBI" id="CHEBI:24875"/>
    </ligand>
</feature>
<reference key="1">
    <citation type="submission" date="2008-02" db="EMBL/GenBank/DDBJ databases">
        <title>Complete sequence of chromosome 2 of Burkholderia cenocepacia MC0-3.</title>
        <authorList>
            <person name="Copeland A."/>
            <person name="Lucas S."/>
            <person name="Lapidus A."/>
            <person name="Barry K."/>
            <person name="Bruce D."/>
            <person name="Goodwin L."/>
            <person name="Glavina del Rio T."/>
            <person name="Dalin E."/>
            <person name="Tice H."/>
            <person name="Pitluck S."/>
            <person name="Chain P."/>
            <person name="Malfatti S."/>
            <person name="Shin M."/>
            <person name="Vergez L."/>
            <person name="Schmutz J."/>
            <person name="Larimer F."/>
            <person name="Land M."/>
            <person name="Hauser L."/>
            <person name="Kyrpides N."/>
            <person name="Mikhailova N."/>
            <person name="Tiedje J."/>
            <person name="Richardson P."/>
        </authorList>
    </citation>
    <scope>NUCLEOTIDE SEQUENCE [LARGE SCALE GENOMIC DNA]</scope>
    <source>
        <strain>MC0-3</strain>
    </source>
</reference>
<gene>
    <name evidence="1" type="primary">tsaD</name>
    <name type="synonym">gcp</name>
    <name type="ordered locus">Bcenmc03_3646</name>
</gene>
<keyword id="KW-0012">Acyltransferase</keyword>
<keyword id="KW-0963">Cytoplasm</keyword>
<keyword id="KW-0408">Iron</keyword>
<keyword id="KW-0479">Metal-binding</keyword>
<keyword id="KW-0808">Transferase</keyword>
<keyword id="KW-0819">tRNA processing</keyword>
<name>TSAD_BURO0</name>
<accession>B1K3S7</accession>
<evidence type="ECO:0000255" key="1">
    <source>
        <dbReference type="HAMAP-Rule" id="MF_01445"/>
    </source>
</evidence>
<comment type="function">
    <text evidence="1">Required for the formation of a threonylcarbamoyl group on adenosine at position 37 (t(6)A37) in tRNAs that read codons beginning with adenine. Is involved in the transfer of the threonylcarbamoyl moiety of threonylcarbamoyl-AMP (TC-AMP) to the N6 group of A37, together with TsaE and TsaB. TsaD likely plays a direct catalytic role in this reaction.</text>
</comment>
<comment type="catalytic activity">
    <reaction evidence="1">
        <text>L-threonylcarbamoyladenylate + adenosine(37) in tRNA = N(6)-L-threonylcarbamoyladenosine(37) in tRNA + AMP + H(+)</text>
        <dbReference type="Rhea" id="RHEA:37059"/>
        <dbReference type="Rhea" id="RHEA-COMP:10162"/>
        <dbReference type="Rhea" id="RHEA-COMP:10163"/>
        <dbReference type="ChEBI" id="CHEBI:15378"/>
        <dbReference type="ChEBI" id="CHEBI:73682"/>
        <dbReference type="ChEBI" id="CHEBI:74411"/>
        <dbReference type="ChEBI" id="CHEBI:74418"/>
        <dbReference type="ChEBI" id="CHEBI:456215"/>
        <dbReference type="EC" id="2.3.1.234"/>
    </reaction>
</comment>
<comment type="cofactor">
    <cofactor evidence="1">
        <name>Fe(2+)</name>
        <dbReference type="ChEBI" id="CHEBI:29033"/>
    </cofactor>
    <text evidence="1">Binds 1 Fe(2+) ion per subunit.</text>
</comment>
<comment type="subcellular location">
    <subcellularLocation>
        <location evidence="1">Cytoplasm</location>
    </subcellularLocation>
</comment>
<comment type="similarity">
    <text evidence="1">Belongs to the KAE1 / TsaD family.</text>
</comment>
<protein>
    <recommendedName>
        <fullName evidence="1">tRNA N6-adenosine threonylcarbamoyltransferase</fullName>
        <ecNumber evidence="1">2.3.1.234</ecNumber>
    </recommendedName>
    <alternativeName>
        <fullName evidence="1">N6-L-threonylcarbamoyladenine synthase</fullName>
        <shortName evidence="1">t(6)A synthase</shortName>
    </alternativeName>
    <alternativeName>
        <fullName evidence="1">t(6)A37 threonylcarbamoyladenosine biosynthesis protein TsaD</fullName>
    </alternativeName>
    <alternativeName>
        <fullName evidence="1">tRNA threonylcarbamoyladenosine biosynthesis protein TsaD</fullName>
    </alternativeName>
</protein>
<proteinExistence type="inferred from homology"/>